<dbReference type="EMBL" id="BA000016">
    <property type="protein sequence ID" value="BAB82092.1"/>
    <property type="molecule type" value="Genomic_DNA"/>
</dbReference>
<dbReference type="RefSeq" id="WP_003454379.1">
    <property type="nucleotide sequence ID" value="NC_003366.1"/>
</dbReference>
<dbReference type="SMR" id="Q8XHU2"/>
<dbReference type="STRING" id="195102.gene:10491703"/>
<dbReference type="GeneID" id="93001028"/>
<dbReference type="KEGG" id="cpe:CPE2386"/>
<dbReference type="HOGENOM" id="CLU_055188_4_2_9"/>
<dbReference type="Proteomes" id="UP000000818">
    <property type="component" value="Chromosome"/>
</dbReference>
<dbReference type="GO" id="GO:0022625">
    <property type="term" value="C:cytosolic large ribosomal subunit"/>
    <property type="evidence" value="ECO:0007669"/>
    <property type="project" value="TreeGrafter"/>
</dbReference>
<dbReference type="GO" id="GO:0019843">
    <property type="term" value="F:rRNA binding"/>
    <property type="evidence" value="ECO:0007669"/>
    <property type="project" value="UniProtKB-UniRule"/>
</dbReference>
<dbReference type="GO" id="GO:0003735">
    <property type="term" value="F:structural constituent of ribosome"/>
    <property type="evidence" value="ECO:0007669"/>
    <property type="project" value="InterPro"/>
</dbReference>
<dbReference type="GO" id="GO:0006412">
    <property type="term" value="P:translation"/>
    <property type="evidence" value="ECO:0007669"/>
    <property type="project" value="UniProtKB-UniRule"/>
</dbReference>
<dbReference type="Gene3D" id="3.100.10.10">
    <property type="match status" value="1"/>
</dbReference>
<dbReference type="HAMAP" id="MF_01341">
    <property type="entry name" value="Ribosomal_uL15"/>
    <property type="match status" value="1"/>
</dbReference>
<dbReference type="InterPro" id="IPR030878">
    <property type="entry name" value="Ribosomal_uL15"/>
</dbReference>
<dbReference type="InterPro" id="IPR021131">
    <property type="entry name" value="Ribosomal_uL15/eL18"/>
</dbReference>
<dbReference type="InterPro" id="IPR036227">
    <property type="entry name" value="Ribosomal_uL15/eL18_sf"/>
</dbReference>
<dbReference type="InterPro" id="IPR005749">
    <property type="entry name" value="Ribosomal_uL15_bac-type"/>
</dbReference>
<dbReference type="InterPro" id="IPR001196">
    <property type="entry name" value="Ribosomal_uL15_CS"/>
</dbReference>
<dbReference type="NCBIfam" id="TIGR01071">
    <property type="entry name" value="rplO_bact"/>
    <property type="match status" value="1"/>
</dbReference>
<dbReference type="PANTHER" id="PTHR12934">
    <property type="entry name" value="50S RIBOSOMAL PROTEIN L15"/>
    <property type="match status" value="1"/>
</dbReference>
<dbReference type="PANTHER" id="PTHR12934:SF11">
    <property type="entry name" value="LARGE RIBOSOMAL SUBUNIT PROTEIN UL15M"/>
    <property type="match status" value="1"/>
</dbReference>
<dbReference type="Pfam" id="PF00828">
    <property type="entry name" value="Ribosomal_L27A"/>
    <property type="match status" value="1"/>
</dbReference>
<dbReference type="SUPFAM" id="SSF52080">
    <property type="entry name" value="Ribosomal proteins L15p and L18e"/>
    <property type="match status" value="1"/>
</dbReference>
<dbReference type="PROSITE" id="PS00475">
    <property type="entry name" value="RIBOSOMAL_L15"/>
    <property type="match status" value="1"/>
</dbReference>
<feature type="chain" id="PRO_0000104706" description="Large ribosomal subunit protein uL15">
    <location>
        <begin position="1"/>
        <end position="146"/>
    </location>
</feature>
<feature type="region of interest" description="Disordered" evidence="2">
    <location>
        <begin position="1"/>
        <end position="54"/>
    </location>
</feature>
<feature type="compositionally biased region" description="Gly residues" evidence="2">
    <location>
        <begin position="21"/>
        <end position="31"/>
    </location>
</feature>
<feature type="compositionally biased region" description="Gly residues" evidence="2">
    <location>
        <begin position="42"/>
        <end position="52"/>
    </location>
</feature>
<protein>
    <recommendedName>
        <fullName evidence="1">Large ribosomal subunit protein uL15</fullName>
    </recommendedName>
    <alternativeName>
        <fullName evidence="3">50S ribosomal protein L15</fullName>
    </alternativeName>
</protein>
<name>RL15_CLOPE</name>
<organism>
    <name type="scientific">Clostridium perfringens (strain 13 / Type A)</name>
    <dbReference type="NCBI Taxonomy" id="195102"/>
    <lineage>
        <taxon>Bacteria</taxon>
        <taxon>Bacillati</taxon>
        <taxon>Bacillota</taxon>
        <taxon>Clostridia</taxon>
        <taxon>Eubacteriales</taxon>
        <taxon>Clostridiaceae</taxon>
        <taxon>Clostridium</taxon>
    </lineage>
</organism>
<comment type="function">
    <text evidence="1">Binds to the 23S rRNA.</text>
</comment>
<comment type="subunit">
    <text evidence="1">Part of the 50S ribosomal subunit.</text>
</comment>
<comment type="similarity">
    <text evidence="1">Belongs to the universal ribosomal protein uL15 family.</text>
</comment>
<evidence type="ECO:0000255" key="1">
    <source>
        <dbReference type="HAMAP-Rule" id="MF_01341"/>
    </source>
</evidence>
<evidence type="ECO:0000256" key="2">
    <source>
        <dbReference type="SAM" id="MobiDB-lite"/>
    </source>
</evidence>
<evidence type="ECO:0000305" key="3"/>
<accession>Q8XHU2</accession>
<sequence>MKLHELRPAAGSKSAPKRVGRGTGSGLGRNAGKGEKGQNARSGGGVRPGFEGGQMPLYRRLPKRGFTNPFTKHFVTINVDRLNIFDNGTEVTPELLLERRVVSKLMDGVKILGNGNIEKSLTIAGCKLSKQAAEKIVAAGGKVEVK</sequence>
<proteinExistence type="inferred from homology"/>
<keyword id="KW-1185">Reference proteome</keyword>
<keyword id="KW-0687">Ribonucleoprotein</keyword>
<keyword id="KW-0689">Ribosomal protein</keyword>
<keyword id="KW-0694">RNA-binding</keyword>
<keyword id="KW-0699">rRNA-binding</keyword>
<reference key="1">
    <citation type="journal article" date="2002" name="Proc. Natl. Acad. Sci. U.S.A.">
        <title>Complete genome sequence of Clostridium perfringens, an anaerobic flesh-eater.</title>
        <authorList>
            <person name="Shimizu T."/>
            <person name="Ohtani K."/>
            <person name="Hirakawa H."/>
            <person name="Ohshima K."/>
            <person name="Yamashita A."/>
            <person name="Shiba T."/>
            <person name="Ogasawara N."/>
            <person name="Hattori M."/>
            <person name="Kuhara S."/>
            <person name="Hayashi H."/>
        </authorList>
    </citation>
    <scope>NUCLEOTIDE SEQUENCE [LARGE SCALE GENOMIC DNA]</scope>
    <source>
        <strain>13 / Type A</strain>
    </source>
</reference>
<gene>
    <name evidence="1" type="primary">rplO</name>
    <name type="ordered locus">CPE2386</name>
</gene>